<keyword id="KW-0274">FAD</keyword>
<keyword id="KW-0285">Flavoprotein</keyword>
<keyword id="KW-0444">Lipid biosynthesis</keyword>
<keyword id="KW-0443">Lipid metabolism</keyword>
<keyword id="KW-0472">Membrane</keyword>
<keyword id="KW-0520">NAD</keyword>
<keyword id="KW-0560">Oxidoreductase</keyword>
<keyword id="KW-1185">Reference proteome</keyword>
<keyword id="KW-0752">Steroid biosynthesis</keyword>
<keyword id="KW-0753">Steroid metabolism</keyword>
<keyword id="KW-0756">Sterol biosynthesis</keyword>
<keyword id="KW-1207">Sterol metabolism</keyword>
<keyword id="KW-0812">Transmembrane</keyword>
<keyword id="KW-1133">Transmembrane helix</keyword>
<sequence length="304" mass="33745">MEISTDSNMLVALAVIGVTVLLFLIKALGSQAKKAPLTLLDPNAKYPLPLIEKQEISHDTKKFRFGLPSQEHVLGLPVGQHVYLSAKINGSLVVRAYTPVSSDEVKGHVDLIVKVYYKNVHPKFPEGGKMSQHLDSLKIGETIDFRGPNGLLVYKEKGKFAIRPDKKSEPKLKVAKHVGMLAGGTGITPMLQLIRQITQDPNDNTKCSLIFANQTEDDILLRYELETVAKSHPEQFKLWYTLDRPPQGWKYGAGFVTADMIKEHLPPPSEDVVVLMCGPPPMIQFACQDNLTKLGYPEAGRFAY</sequence>
<reference key="1">
    <citation type="submission" date="2006-10" db="EMBL/GenBank/DDBJ databases">
        <authorList>
            <consortium name="Sanger Xenopus tropicalis EST/cDNA project"/>
        </authorList>
    </citation>
    <scope>NUCLEOTIDE SEQUENCE [LARGE SCALE MRNA]</scope>
    <source>
        <tissue>Neurula</tissue>
    </source>
</reference>
<reference key="2">
    <citation type="submission" date="2005-03" db="EMBL/GenBank/DDBJ databases">
        <authorList>
            <consortium name="NIH - Xenopus Gene Collection (XGC) project"/>
        </authorList>
    </citation>
    <scope>NUCLEOTIDE SEQUENCE [LARGE SCALE MRNA]</scope>
    <source>
        <tissue>Embryo</tissue>
    </source>
</reference>
<gene>
    <name type="primary">cyb5r2</name>
    <name type="ORF">TNeu132f07.1</name>
</gene>
<feature type="chain" id="PRO_0000287554" description="NADH-cytochrome b5 reductase 2">
    <location>
        <begin position="1"/>
        <end position="304"/>
    </location>
</feature>
<feature type="transmembrane region" description="Helical" evidence="2">
    <location>
        <begin position="9"/>
        <end position="29"/>
    </location>
</feature>
<feature type="domain" description="FAD-binding FR-type" evidence="3">
    <location>
        <begin position="43"/>
        <end position="155"/>
    </location>
</feature>
<feature type="binding site" evidence="1">
    <location>
        <begin position="135"/>
        <end position="150"/>
    </location>
    <ligand>
        <name>FAD</name>
        <dbReference type="ChEBI" id="CHEBI:57692"/>
    </ligand>
</feature>
<feature type="binding site" evidence="1">
    <location>
        <begin position="174"/>
        <end position="209"/>
    </location>
    <ligand>
        <name>FAD</name>
        <dbReference type="ChEBI" id="CHEBI:57692"/>
    </ligand>
</feature>
<name>NB5R2_XENTR</name>
<protein>
    <recommendedName>
        <fullName>NADH-cytochrome b5 reductase 2</fullName>
        <shortName>b5R.2</shortName>
        <ecNumber>1.6.2.2</ecNumber>
    </recommendedName>
</protein>
<comment type="function">
    <text evidence="1">NADH-cytochrome b5 reductases are involved in desaturation and elongation of fatty acids, cholesterol biosynthesis and drug metabolism.</text>
</comment>
<comment type="catalytic activity">
    <reaction>
        <text>2 Fe(III)-[cytochrome b5] + NADH = 2 Fe(II)-[cytochrome b5] + NAD(+) + H(+)</text>
        <dbReference type="Rhea" id="RHEA:46680"/>
        <dbReference type="Rhea" id="RHEA-COMP:10438"/>
        <dbReference type="Rhea" id="RHEA-COMP:10439"/>
        <dbReference type="ChEBI" id="CHEBI:15378"/>
        <dbReference type="ChEBI" id="CHEBI:29033"/>
        <dbReference type="ChEBI" id="CHEBI:29034"/>
        <dbReference type="ChEBI" id="CHEBI:57540"/>
        <dbReference type="ChEBI" id="CHEBI:57945"/>
        <dbReference type="EC" id="1.6.2.2"/>
    </reaction>
</comment>
<comment type="cofactor">
    <cofactor evidence="1">
        <name>FAD</name>
        <dbReference type="ChEBI" id="CHEBI:57692"/>
    </cofactor>
</comment>
<comment type="subcellular location">
    <subcellularLocation>
        <location evidence="4">Membrane</location>
        <topology evidence="4">Single-pass membrane protein</topology>
    </subcellularLocation>
</comment>
<comment type="similarity">
    <text evidence="4">Belongs to the flavoprotein pyridine nucleotide cytochrome reductase family.</text>
</comment>
<proteinExistence type="evidence at transcript level"/>
<evidence type="ECO:0000250" key="1"/>
<evidence type="ECO:0000255" key="2"/>
<evidence type="ECO:0000255" key="3">
    <source>
        <dbReference type="PROSITE-ProRule" id="PRU00716"/>
    </source>
</evidence>
<evidence type="ECO:0000305" key="4"/>
<dbReference type="EC" id="1.6.2.2"/>
<dbReference type="EMBL" id="CR942741">
    <property type="protein sequence ID" value="CAJ83022.1"/>
    <property type="molecule type" value="mRNA"/>
</dbReference>
<dbReference type="EMBL" id="BC091602">
    <property type="protein sequence ID" value="AAH91602.1"/>
    <property type="molecule type" value="mRNA"/>
</dbReference>
<dbReference type="RefSeq" id="NP_001025638.1">
    <property type="nucleotide sequence ID" value="NM_001030467.1"/>
</dbReference>
<dbReference type="SMR" id="Q5BJ68"/>
<dbReference type="FunCoup" id="Q5BJ68">
    <property type="interactions" value="1105"/>
</dbReference>
<dbReference type="STRING" id="8364.ENSXETP00000031609"/>
<dbReference type="PaxDb" id="8364-ENSXETP00000019844"/>
<dbReference type="DNASU" id="595026"/>
<dbReference type="GeneID" id="595026"/>
<dbReference type="KEGG" id="xtr:595026"/>
<dbReference type="AGR" id="Xenbase:XB-GENE-1006041"/>
<dbReference type="CTD" id="51700"/>
<dbReference type="Xenbase" id="XB-GENE-1006041">
    <property type="gene designation" value="cyb5r2"/>
</dbReference>
<dbReference type="eggNOG" id="KOG0534">
    <property type="taxonomic scope" value="Eukaryota"/>
</dbReference>
<dbReference type="HOGENOM" id="CLU_003827_9_2_1"/>
<dbReference type="InParanoid" id="Q5BJ68"/>
<dbReference type="OrthoDB" id="432685at2759"/>
<dbReference type="TreeFam" id="TF314333"/>
<dbReference type="Reactome" id="R-XTR-1237044">
    <property type="pathway name" value="Erythrocytes take up carbon dioxide and release oxygen"/>
</dbReference>
<dbReference type="Proteomes" id="UP000008143">
    <property type="component" value="Chromosome 4"/>
</dbReference>
<dbReference type="Bgee" id="ENSXETG00000009054">
    <property type="expression patterns" value="Expressed in mesonephros and 11 other cell types or tissues"/>
</dbReference>
<dbReference type="ExpressionAtlas" id="Q5BJ68">
    <property type="expression patterns" value="baseline"/>
</dbReference>
<dbReference type="GO" id="GO:0016020">
    <property type="term" value="C:membrane"/>
    <property type="evidence" value="ECO:0007669"/>
    <property type="project" value="UniProtKB-SubCell"/>
</dbReference>
<dbReference type="GO" id="GO:0004128">
    <property type="term" value="F:cytochrome-b5 reductase activity, acting on NAD(P)H"/>
    <property type="evidence" value="ECO:0007669"/>
    <property type="project" value="UniProtKB-EC"/>
</dbReference>
<dbReference type="GO" id="GO:0001878">
    <property type="term" value="P:response to yeast"/>
    <property type="evidence" value="ECO:0007669"/>
    <property type="project" value="Ensembl"/>
</dbReference>
<dbReference type="GO" id="GO:0016126">
    <property type="term" value="P:sterol biosynthetic process"/>
    <property type="evidence" value="ECO:0007669"/>
    <property type="project" value="UniProtKB-KW"/>
</dbReference>
<dbReference type="CDD" id="cd06183">
    <property type="entry name" value="cyt_b5_reduct_like"/>
    <property type="match status" value="1"/>
</dbReference>
<dbReference type="FunFam" id="2.40.30.10:FF:000021">
    <property type="entry name" value="NADH-cytochrome b5 reductase"/>
    <property type="match status" value="1"/>
</dbReference>
<dbReference type="FunFam" id="3.40.50.80:FF:000005">
    <property type="entry name" value="NADH-cytochrome b5 reductase"/>
    <property type="match status" value="1"/>
</dbReference>
<dbReference type="Gene3D" id="3.40.50.80">
    <property type="entry name" value="Nucleotide-binding domain of ferredoxin-NADP reductase (FNR) module"/>
    <property type="match status" value="1"/>
</dbReference>
<dbReference type="Gene3D" id="2.40.30.10">
    <property type="entry name" value="Translation factors"/>
    <property type="match status" value="1"/>
</dbReference>
<dbReference type="InterPro" id="IPR001834">
    <property type="entry name" value="CBR-like"/>
</dbReference>
<dbReference type="InterPro" id="IPR008333">
    <property type="entry name" value="Cbr1-like_FAD-bd_dom"/>
</dbReference>
<dbReference type="InterPro" id="IPR017927">
    <property type="entry name" value="FAD-bd_FR_type"/>
</dbReference>
<dbReference type="InterPro" id="IPR001709">
    <property type="entry name" value="Flavoprot_Pyr_Nucl_cyt_Rdtase"/>
</dbReference>
<dbReference type="InterPro" id="IPR039261">
    <property type="entry name" value="FNR_nucleotide-bd"/>
</dbReference>
<dbReference type="InterPro" id="IPR001433">
    <property type="entry name" value="OxRdtase_FAD/NAD-bd"/>
</dbReference>
<dbReference type="InterPro" id="IPR017938">
    <property type="entry name" value="Riboflavin_synthase-like_b-brl"/>
</dbReference>
<dbReference type="PANTHER" id="PTHR19370">
    <property type="entry name" value="NADH-CYTOCHROME B5 REDUCTASE"/>
    <property type="match status" value="1"/>
</dbReference>
<dbReference type="PANTHER" id="PTHR19370:SF108">
    <property type="entry name" value="NADH-CYTOCHROME B5 REDUCTASE 2"/>
    <property type="match status" value="1"/>
</dbReference>
<dbReference type="Pfam" id="PF00970">
    <property type="entry name" value="FAD_binding_6"/>
    <property type="match status" value="1"/>
</dbReference>
<dbReference type="Pfam" id="PF00175">
    <property type="entry name" value="NAD_binding_1"/>
    <property type="match status" value="1"/>
</dbReference>
<dbReference type="PRINTS" id="PR00406">
    <property type="entry name" value="CYTB5RDTASE"/>
</dbReference>
<dbReference type="PRINTS" id="PR00371">
    <property type="entry name" value="FPNCR"/>
</dbReference>
<dbReference type="SUPFAM" id="SSF52343">
    <property type="entry name" value="Ferredoxin reductase-like, C-terminal NADP-linked domain"/>
    <property type="match status" value="1"/>
</dbReference>
<dbReference type="SUPFAM" id="SSF63380">
    <property type="entry name" value="Riboflavin synthase domain-like"/>
    <property type="match status" value="1"/>
</dbReference>
<dbReference type="PROSITE" id="PS51384">
    <property type="entry name" value="FAD_FR"/>
    <property type="match status" value="1"/>
</dbReference>
<accession>Q5BJ68</accession>
<organism>
    <name type="scientific">Xenopus tropicalis</name>
    <name type="common">Western clawed frog</name>
    <name type="synonym">Silurana tropicalis</name>
    <dbReference type="NCBI Taxonomy" id="8364"/>
    <lineage>
        <taxon>Eukaryota</taxon>
        <taxon>Metazoa</taxon>
        <taxon>Chordata</taxon>
        <taxon>Craniata</taxon>
        <taxon>Vertebrata</taxon>
        <taxon>Euteleostomi</taxon>
        <taxon>Amphibia</taxon>
        <taxon>Batrachia</taxon>
        <taxon>Anura</taxon>
        <taxon>Pipoidea</taxon>
        <taxon>Pipidae</taxon>
        <taxon>Xenopodinae</taxon>
        <taxon>Xenopus</taxon>
        <taxon>Silurana</taxon>
    </lineage>
</organism>